<sequence length="119" mass="12187">MARSMKLACVVLAMCMLVAPMAEAAFSCATVMTDLRPCLTYLEAANNASPSPPCCAGVKNLQAAAPTVADRQAACNCLKSTAGAISNLNANNAAALPGKCGVNIPYKISASTNCNTIRF</sequence>
<keyword id="KW-1015">Disulfide bond</keyword>
<keyword id="KW-0445">Lipid transport</keyword>
<keyword id="KW-0732">Signal</keyword>
<keyword id="KW-0813">Transport</keyword>
<comment type="function">
    <text evidence="5">Plant non-specific lipid-transfer proteins transfer phospholipids as well as galactolipids across membranes. May play a role in wax or cutin deposition in the cell walls of expanding epidermal cells and certain secretory tissues.</text>
</comment>
<comment type="tissue specificity">
    <text evidence="3">Expressed in roots, stem, leaves and tendrils of the mature plant.</text>
</comment>
<comment type="developmental stage">
    <text evidence="3">Expression increases sharply after germination and reamins high in the mature plant.</text>
</comment>
<comment type="similarity">
    <text evidence="5">Belongs to the plant LTP family.</text>
</comment>
<proteinExistence type="evidence at transcript level"/>
<protein>
    <recommendedName>
        <fullName evidence="4">Non-specific lipid-transfer protein 3</fullName>
        <shortName evidence="4">PsLTP1</shortName>
    </recommendedName>
</protein>
<reference evidence="5" key="1">
    <citation type="journal article" date="2016" name="BMC Plant Biol.">
        <title>A novel lipid transfer protein from the pea Pisum sativum: isolation, recombinant expression, solution structure, antifungal activity, lipid binding, and allergenic properties.</title>
        <authorList>
            <person name="Bogdanov I.V."/>
            <person name="Shenkarev Z.O."/>
            <person name="Finkina E.I."/>
            <person name="Melnikova D.N."/>
            <person name="Rumynskiy E.I."/>
            <person name="Arseniev A.S."/>
            <person name="Ovchinnikova T.V."/>
        </authorList>
    </citation>
    <scope>NUCLEOTIDE SEQUENCE [MRNA]</scope>
    <scope>TISSUE SPECIFICITY</scope>
    <scope>DEVELOPMENTAL STAGE</scope>
    <source>
        <tissue evidence="3">Seed</tissue>
    </source>
</reference>
<accession>A0A158V976</accession>
<dbReference type="EMBL" id="KJ569143">
    <property type="protein sequence ID" value="AJG44055.1"/>
    <property type="molecule type" value="mRNA"/>
</dbReference>
<dbReference type="RefSeq" id="NP_001413933.1">
    <property type="nucleotide sequence ID" value="NM_001427004.1"/>
</dbReference>
<dbReference type="SMR" id="A0A158V976"/>
<dbReference type="EnsemblPlants" id="Psat7g234720.1">
    <property type="protein sequence ID" value="Psat7g234720.1.cds"/>
    <property type="gene ID" value="Psat7g234720"/>
</dbReference>
<dbReference type="GeneID" id="127101072"/>
<dbReference type="Gramene" id="Psat7g234720.1">
    <property type="protein sequence ID" value="Psat7g234720.1.cds"/>
    <property type="gene ID" value="Psat7g234720"/>
</dbReference>
<dbReference type="OrthoDB" id="1890443at2759"/>
<dbReference type="GO" id="GO:0008289">
    <property type="term" value="F:lipid binding"/>
    <property type="evidence" value="ECO:0007669"/>
    <property type="project" value="InterPro"/>
</dbReference>
<dbReference type="GO" id="GO:0006869">
    <property type="term" value="P:lipid transport"/>
    <property type="evidence" value="ECO:0007669"/>
    <property type="project" value="UniProtKB-KW"/>
</dbReference>
<dbReference type="CDD" id="cd01960">
    <property type="entry name" value="nsLTP1"/>
    <property type="match status" value="1"/>
</dbReference>
<dbReference type="Gene3D" id="1.10.110.10">
    <property type="entry name" value="Plant lipid-transfer and hydrophobic proteins"/>
    <property type="match status" value="1"/>
</dbReference>
<dbReference type="InterPro" id="IPR036312">
    <property type="entry name" value="Bifun_inhib/LTP/seed_sf"/>
</dbReference>
<dbReference type="InterPro" id="IPR016140">
    <property type="entry name" value="Bifunc_inhib/LTP/seed_store"/>
</dbReference>
<dbReference type="InterPro" id="IPR000528">
    <property type="entry name" value="Plant_nsLTP"/>
</dbReference>
<dbReference type="PANTHER" id="PTHR33076">
    <property type="entry name" value="NON-SPECIFIC LIPID-TRANSFER PROTEIN 2-RELATED"/>
    <property type="match status" value="1"/>
</dbReference>
<dbReference type="Pfam" id="PF00234">
    <property type="entry name" value="Tryp_alpha_amyl"/>
    <property type="match status" value="1"/>
</dbReference>
<dbReference type="PRINTS" id="PR00382">
    <property type="entry name" value="LIPIDTRNSFER"/>
</dbReference>
<dbReference type="SMART" id="SM00499">
    <property type="entry name" value="AAI"/>
    <property type="match status" value="1"/>
</dbReference>
<dbReference type="SUPFAM" id="SSF47699">
    <property type="entry name" value="Bifunctional inhibitor/lipid-transfer protein/seed storage 2S albumin"/>
    <property type="match status" value="1"/>
</dbReference>
<dbReference type="PROSITE" id="PS00597">
    <property type="entry name" value="PLANT_LTP"/>
    <property type="match status" value="1"/>
</dbReference>
<feature type="signal peptide" evidence="2">
    <location>
        <begin position="1"/>
        <end position="24"/>
    </location>
</feature>
<feature type="chain" id="PRO_0000437172" description="Non-specific lipid-transfer protein 3" evidence="2">
    <location>
        <begin position="25"/>
        <end position="119"/>
    </location>
</feature>
<feature type="disulfide bond" evidence="1">
    <location>
        <begin position="28"/>
        <end position="77"/>
    </location>
</feature>
<feature type="disulfide bond" evidence="1">
    <location>
        <begin position="38"/>
        <end position="54"/>
    </location>
</feature>
<feature type="disulfide bond" evidence="1">
    <location>
        <begin position="55"/>
        <end position="100"/>
    </location>
</feature>
<feature type="disulfide bond" evidence="1">
    <location>
        <begin position="75"/>
        <end position="114"/>
    </location>
</feature>
<evidence type="ECO:0000250" key="1">
    <source>
        <dbReference type="UniProtKB" id="A0A161AT60"/>
    </source>
</evidence>
<evidence type="ECO:0000255" key="2"/>
<evidence type="ECO:0000269" key="3">
    <source>
    </source>
</evidence>
<evidence type="ECO:0000303" key="4">
    <source>
    </source>
</evidence>
<evidence type="ECO:0000305" key="5"/>
<organism>
    <name type="scientific">Pisum sativum</name>
    <name type="common">Garden pea</name>
    <name type="synonym">Lathyrus oleraceus</name>
    <dbReference type="NCBI Taxonomy" id="3888"/>
    <lineage>
        <taxon>Eukaryota</taxon>
        <taxon>Viridiplantae</taxon>
        <taxon>Streptophyta</taxon>
        <taxon>Embryophyta</taxon>
        <taxon>Tracheophyta</taxon>
        <taxon>Spermatophyta</taxon>
        <taxon>Magnoliopsida</taxon>
        <taxon>eudicotyledons</taxon>
        <taxon>Gunneridae</taxon>
        <taxon>Pentapetalae</taxon>
        <taxon>rosids</taxon>
        <taxon>fabids</taxon>
        <taxon>Fabales</taxon>
        <taxon>Fabaceae</taxon>
        <taxon>Papilionoideae</taxon>
        <taxon>50 kb inversion clade</taxon>
        <taxon>NPAAA clade</taxon>
        <taxon>Hologalegina</taxon>
        <taxon>IRL clade</taxon>
        <taxon>Fabeae</taxon>
        <taxon>Pisum</taxon>
    </lineage>
</organism>
<name>NLTP3_PEA</name>